<evidence type="ECO:0000250" key="1"/>
<evidence type="ECO:0000255" key="2"/>
<evidence type="ECO:0000269" key="3">
    <source>
    </source>
</evidence>
<evidence type="ECO:0000303" key="4">
    <source>
    </source>
</evidence>
<evidence type="ECO:0000305" key="5"/>
<keyword id="KW-0025">Alternative splicing</keyword>
<keyword id="KW-0256">Endoplasmic reticulum</keyword>
<keyword id="KW-0408">Iron</keyword>
<keyword id="KW-0443">Lipid metabolism</keyword>
<keyword id="KW-0472">Membrane</keyword>
<keyword id="KW-0560">Oxidoreductase</keyword>
<keyword id="KW-1185">Reference proteome</keyword>
<keyword id="KW-0812">Transmembrane</keyword>
<keyword id="KW-1133">Transmembrane helix</keyword>
<proteinExistence type="evidence at protein level"/>
<gene>
    <name type="primary">Agmo</name>
    <name type="synonym">Tmem195</name>
</gene>
<comment type="function">
    <text evidence="1">Glyceryl-ether monooxygenase that cleaves the O-alkyl bond of ether lipids. Ether lipids are essential components of brain membranes (By similarity).</text>
</comment>
<comment type="catalytic activity">
    <reaction>
        <text>1-O-(1,2-saturated-alkyl)-sn-glycerol + (6R)-L-erythro-5,6,7,8-tetrahydrobiopterin + O2 = a 1-(1-hydroxyalkyl)-sn-glycerol + (6R)-L-erythro-6,7-dihydrobiopterin + H2O</text>
        <dbReference type="Rhea" id="RHEA:36255"/>
        <dbReference type="ChEBI" id="CHEBI:15377"/>
        <dbReference type="ChEBI" id="CHEBI:15379"/>
        <dbReference type="ChEBI" id="CHEBI:43120"/>
        <dbReference type="ChEBI" id="CHEBI:59560"/>
        <dbReference type="ChEBI" id="CHEBI:73418"/>
        <dbReference type="ChEBI" id="CHEBI:83957"/>
        <dbReference type="EC" id="1.14.16.5"/>
    </reaction>
</comment>
<comment type="cofactor">
    <cofactor evidence="1">
        <name>Fe cation</name>
        <dbReference type="ChEBI" id="CHEBI:24875"/>
    </cofactor>
</comment>
<comment type="subcellular location">
    <subcellularLocation>
        <location evidence="1">Endoplasmic reticulum membrane</location>
        <topology evidence="1">Multi-pass membrane protein</topology>
    </subcellularLocation>
</comment>
<comment type="alternative products">
    <event type="alternative splicing"/>
    <isoform>
        <id>Q8BS35-1</id>
        <name>1</name>
        <sequence type="displayed"/>
    </isoform>
    <isoform>
        <id>Q8BS35-2</id>
        <name>2</name>
        <sequence type="described" ref="VSP_027599"/>
    </isoform>
    <isoform>
        <id>Q8BS35-3</id>
        <name>3</name>
        <sequence type="described" ref="VSP_027600"/>
    </isoform>
</comment>
<comment type="tissue specificity">
    <text evidence="3">Highly expressed in lever and small intestine.</text>
</comment>
<comment type="miscellaneous">
    <molecule>Isoform 2</molecule>
    <text evidence="5">May be produced at very low levels due to a premature stop codon in the mRNA, leading to nonsense-mediated mRNA decay.</text>
</comment>
<comment type="similarity">
    <text evidence="5">Belongs to the sterol desaturase family. TMEM195 subfamily.</text>
</comment>
<comment type="sequence caution" evidence="5">
    <conflict type="erroneous initiation">
        <sequence resource="EMBL-CDS" id="BAC30271"/>
    </conflict>
</comment>
<comment type="sequence caution" evidence="5">
    <conflict type="miscellaneous discrepancy">
        <sequence resource="EMBL-CDS" id="BAC34143"/>
    </conflict>
    <text>Intron retention.</text>
</comment>
<feature type="chain" id="PRO_0000299301" description="Alkylglycerol monooxygenase">
    <location>
        <begin position="1"/>
        <end position="447"/>
    </location>
</feature>
<feature type="transmembrane region" description="Helical" evidence="2">
    <location>
        <begin position="43"/>
        <end position="63"/>
    </location>
</feature>
<feature type="transmembrane region" description="Helical" evidence="2">
    <location>
        <begin position="111"/>
        <end position="131"/>
    </location>
</feature>
<feature type="transmembrane region" description="Helical" evidence="2">
    <location>
        <begin position="170"/>
        <end position="190"/>
    </location>
</feature>
<feature type="transmembrane region" description="Helical" evidence="2">
    <location>
        <begin position="340"/>
        <end position="360"/>
    </location>
</feature>
<feature type="transmembrane region" description="Helical" evidence="2">
    <location>
        <begin position="363"/>
        <end position="383"/>
    </location>
</feature>
<feature type="transmembrane region" description="Helical" evidence="2">
    <location>
        <begin position="413"/>
        <end position="433"/>
    </location>
</feature>
<feature type="domain" description="Fatty acid hydroxylase" evidence="2">
    <location>
        <begin position="119"/>
        <end position="249"/>
    </location>
</feature>
<feature type="short sequence motif" description="Histidine box-1">
    <location>
        <begin position="132"/>
        <end position="136"/>
    </location>
</feature>
<feature type="short sequence motif" description="Histidine box-2">
    <location>
        <begin position="145"/>
        <end position="149"/>
    </location>
</feature>
<feature type="short sequence motif" description="Histidine box-3">
    <location>
        <begin position="221"/>
        <end position="225"/>
    </location>
</feature>
<feature type="splice variant" id="VSP_027599" description="In isoform 2." evidence="4">
    <original>IFFSVCIAFWGVRSITQLTSGSWKKP</original>
    <variation>IPQLSVLTFVVT</variation>
    <location>
        <begin position="422"/>
        <end position="447"/>
    </location>
</feature>
<feature type="splice variant" id="VSP_027600" description="In isoform 3." evidence="4">
    <original>IFFSVCIAFWGVRSITQLTSGSWKKP</original>
    <variation>GWCTEVWSSALPPS</variation>
    <location>
        <begin position="422"/>
        <end position="447"/>
    </location>
</feature>
<name>ALKMO_MOUSE</name>
<reference key="1">
    <citation type="journal article" date="2005" name="Science">
        <title>The transcriptional landscape of the mammalian genome.</title>
        <authorList>
            <person name="Carninci P."/>
            <person name="Kasukawa T."/>
            <person name="Katayama S."/>
            <person name="Gough J."/>
            <person name="Frith M.C."/>
            <person name="Maeda N."/>
            <person name="Oyama R."/>
            <person name="Ravasi T."/>
            <person name="Lenhard B."/>
            <person name="Wells C."/>
            <person name="Kodzius R."/>
            <person name="Shimokawa K."/>
            <person name="Bajic V.B."/>
            <person name="Brenner S.E."/>
            <person name="Batalov S."/>
            <person name="Forrest A.R."/>
            <person name="Zavolan M."/>
            <person name="Davis M.J."/>
            <person name="Wilming L.G."/>
            <person name="Aidinis V."/>
            <person name="Allen J.E."/>
            <person name="Ambesi-Impiombato A."/>
            <person name="Apweiler R."/>
            <person name="Aturaliya R.N."/>
            <person name="Bailey T.L."/>
            <person name="Bansal M."/>
            <person name="Baxter L."/>
            <person name="Beisel K.W."/>
            <person name="Bersano T."/>
            <person name="Bono H."/>
            <person name="Chalk A.M."/>
            <person name="Chiu K.P."/>
            <person name="Choudhary V."/>
            <person name="Christoffels A."/>
            <person name="Clutterbuck D.R."/>
            <person name="Crowe M.L."/>
            <person name="Dalla E."/>
            <person name="Dalrymple B.P."/>
            <person name="de Bono B."/>
            <person name="Della Gatta G."/>
            <person name="di Bernardo D."/>
            <person name="Down T."/>
            <person name="Engstrom P."/>
            <person name="Fagiolini M."/>
            <person name="Faulkner G."/>
            <person name="Fletcher C.F."/>
            <person name="Fukushima T."/>
            <person name="Furuno M."/>
            <person name="Futaki S."/>
            <person name="Gariboldi M."/>
            <person name="Georgii-Hemming P."/>
            <person name="Gingeras T.R."/>
            <person name="Gojobori T."/>
            <person name="Green R.E."/>
            <person name="Gustincich S."/>
            <person name="Harbers M."/>
            <person name="Hayashi Y."/>
            <person name="Hensch T.K."/>
            <person name="Hirokawa N."/>
            <person name="Hill D."/>
            <person name="Huminiecki L."/>
            <person name="Iacono M."/>
            <person name="Ikeo K."/>
            <person name="Iwama A."/>
            <person name="Ishikawa T."/>
            <person name="Jakt M."/>
            <person name="Kanapin A."/>
            <person name="Katoh M."/>
            <person name="Kawasawa Y."/>
            <person name="Kelso J."/>
            <person name="Kitamura H."/>
            <person name="Kitano H."/>
            <person name="Kollias G."/>
            <person name="Krishnan S.P."/>
            <person name="Kruger A."/>
            <person name="Kummerfeld S.K."/>
            <person name="Kurochkin I.V."/>
            <person name="Lareau L.F."/>
            <person name="Lazarevic D."/>
            <person name="Lipovich L."/>
            <person name="Liu J."/>
            <person name="Liuni S."/>
            <person name="McWilliam S."/>
            <person name="Madan Babu M."/>
            <person name="Madera M."/>
            <person name="Marchionni L."/>
            <person name="Matsuda H."/>
            <person name="Matsuzawa S."/>
            <person name="Miki H."/>
            <person name="Mignone F."/>
            <person name="Miyake S."/>
            <person name="Morris K."/>
            <person name="Mottagui-Tabar S."/>
            <person name="Mulder N."/>
            <person name="Nakano N."/>
            <person name="Nakauchi H."/>
            <person name="Ng P."/>
            <person name="Nilsson R."/>
            <person name="Nishiguchi S."/>
            <person name="Nishikawa S."/>
            <person name="Nori F."/>
            <person name="Ohara O."/>
            <person name="Okazaki Y."/>
            <person name="Orlando V."/>
            <person name="Pang K.C."/>
            <person name="Pavan W.J."/>
            <person name="Pavesi G."/>
            <person name="Pesole G."/>
            <person name="Petrovsky N."/>
            <person name="Piazza S."/>
            <person name="Reed J."/>
            <person name="Reid J.F."/>
            <person name="Ring B.Z."/>
            <person name="Ringwald M."/>
            <person name="Rost B."/>
            <person name="Ruan Y."/>
            <person name="Salzberg S.L."/>
            <person name="Sandelin A."/>
            <person name="Schneider C."/>
            <person name="Schoenbach C."/>
            <person name="Sekiguchi K."/>
            <person name="Semple C.A."/>
            <person name="Seno S."/>
            <person name="Sessa L."/>
            <person name="Sheng Y."/>
            <person name="Shibata Y."/>
            <person name="Shimada H."/>
            <person name="Shimada K."/>
            <person name="Silva D."/>
            <person name="Sinclair B."/>
            <person name="Sperling S."/>
            <person name="Stupka E."/>
            <person name="Sugiura K."/>
            <person name="Sultana R."/>
            <person name="Takenaka Y."/>
            <person name="Taki K."/>
            <person name="Tammoja K."/>
            <person name="Tan S.L."/>
            <person name="Tang S."/>
            <person name="Taylor M.S."/>
            <person name="Tegner J."/>
            <person name="Teichmann S.A."/>
            <person name="Ueda H.R."/>
            <person name="van Nimwegen E."/>
            <person name="Verardo R."/>
            <person name="Wei C.L."/>
            <person name="Yagi K."/>
            <person name="Yamanishi H."/>
            <person name="Zabarovsky E."/>
            <person name="Zhu S."/>
            <person name="Zimmer A."/>
            <person name="Hide W."/>
            <person name="Bult C."/>
            <person name="Grimmond S.M."/>
            <person name="Teasdale R.D."/>
            <person name="Liu E.T."/>
            <person name="Brusic V."/>
            <person name="Quackenbush J."/>
            <person name="Wahlestedt C."/>
            <person name="Mattick J.S."/>
            <person name="Hume D.A."/>
            <person name="Kai C."/>
            <person name="Sasaki D."/>
            <person name="Tomaru Y."/>
            <person name="Fukuda S."/>
            <person name="Kanamori-Katayama M."/>
            <person name="Suzuki M."/>
            <person name="Aoki J."/>
            <person name="Arakawa T."/>
            <person name="Iida J."/>
            <person name="Imamura K."/>
            <person name="Itoh M."/>
            <person name="Kato T."/>
            <person name="Kawaji H."/>
            <person name="Kawagashira N."/>
            <person name="Kawashima T."/>
            <person name="Kojima M."/>
            <person name="Kondo S."/>
            <person name="Konno H."/>
            <person name="Nakano K."/>
            <person name="Ninomiya N."/>
            <person name="Nishio T."/>
            <person name="Okada M."/>
            <person name="Plessy C."/>
            <person name="Shibata K."/>
            <person name="Shiraki T."/>
            <person name="Suzuki S."/>
            <person name="Tagami M."/>
            <person name="Waki K."/>
            <person name="Watahiki A."/>
            <person name="Okamura-Oho Y."/>
            <person name="Suzuki H."/>
            <person name="Kawai J."/>
            <person name="Hayashizaki Y."/>
        </authorList>
    </citation>
    <scope>NUCLEOTIDE SEQUENCE [LARGE SCALE MRNA] (ISOFORMS 1 AND 2)</scope>
    <scope>NUCLEOTIDE SEQUENCE [LARGE SCALE MRNA] OF 10-447 (ISOFORM 3)</scope>
    <source>
        <strain>C57BL/6J</strain>
        <tissue>Aorta</tissue>
        <tissue>Cerebellum</tissue>
        <tissue>Hypothalamus</tissue>
        <tissue>Liver</tissue>
        <tissue>Vein</tissue>
    </source>
</reference>
<reference key="2">
    <citation type="journal article" date="2010" name="Cell">
        <title>A tissue-specific atlas of mouse protein phosphorylation and expression.</title>
        <authorList>
            <person name="Huttlin E.L."/>
            <person name="Jedrychowski M.P."/>
            <person name="Elias J.E."/>
            <person name="Goswami T."/>
            <person name="Rad R."/>
            <person name="Beausoleil S.A."/>
            <person name="Villen J."/>
            <person name="Haas W."/>
            <person name="Sowa M.E."/>
            <person name="Gygi S.P."/>
        </authorList>
    </citation>
    <scope>IDENTIFICATION BY MASS SPECTROMETRY [LARGE SCALE ANALYSIS]</scope>
    <source>
        <tissue>Liver</tissue>
    </source>
</reference>
<reference key="3">
    <citation type="journal article" date="2010" name="Proc. Natl. Acad. Sci. U.S.A.">
        <title>Identification of the gene encoding alkylglycerol monooxygenase defines a third class of tetrahydrobiopterin-dependent enzymes.</title>
        <authorList>
            <person name="Watschinger K."/>
            <person name="Keller M.A."/>
            <person name="Golderer G."/>
            <person name="Hermann M."/>
            <person name="Maglione M."/>
            <person name="Sarg B."/>
            <person name="Lindner H.H."/>
            <person name="Hermetter A."/>
            <person name="Werner-Felmayer G."/>
            <person name="Konrat R."/>
            <person name="Hulo N."/>
            <person name="Werner E.R."/>
        </authorList>
    </citation>
    <scope>TISSUE SPECIFICITY</scope>
</reference>
<protein>
    <recommendedName>
        <fullName>Alkylglycerol monooxygenase</fullName>
        <ecNumber>1.14.16.5</ecNumber>
    </recommendedName>
    <alternativeName>
        <fullName>Transmembrane protein 195</fullName>
    </alternativeName>
</protein>
<sequence>MRSPGAQDNVSVSQGMRAMFYMMEPSETAFQTVEEVPDYVKKATPFFIFLILLELVISWILKGKPSGRLDDALTSISAGVVSRLPSLFFRSLEVTSYIYIWENYRLLELPWDSTWTWYFTFLGVDFGYYWFHRMAHEINIFWAAHQAHHSSEDYNLSTALRQSVLQQYSSWVFYCPLALFIPPSVFAVHIQFNLLYQFWIHTEIIRTLGPLEVILNTPSHHRVHHGRNRYCIDKNYAGTLIIWDRIFGTFEAENEQVIYGLTHPIGTFEPFNVQFHHLLYIWTTFWTTPGFCHKFSVLFKGPGWGPGKPRLGLSEEIPEVTGQEVPFSSSASQLLKIYTVLQFAVMLAFYEETFANTAVLSQVTLLLRIFFFILTLTSIGFLLDQRSKAATMETFRCLLFLTLHRFGHLKPLIPSLSFAFEIFFSVCIAFWGVRSITQLTSGSWKKP</sequence>
<accession>Q8BS35</accession>
<accession>Q3TR15</accession>
<accession>Q8C7H5</accession>
<accession>Q8CAA6</accession>
<organism>
    <name type="scientific">Mus musculus</name>
    <name type="common">Mouse</name>
    <dbReference type="NCBI Taxonomy" id="10090"/>
    <lineage>
        <taxon>Eukaryota</taxon>
        <taxon>Metazoa</taxon>
        <taxon>Chordata</taxon>
        <taxon>Craniata</taxon>
        <taxon>Vertebrata</taxon>
        <taxon>Euteleostomi</taxon>
        <taxon>Mammalia</taxon>
        <taxon>Eutheria</taxon>
        <taxon>Euarchontoglires</taxon>
        <taxon>Glires</taxon>
        <taxon>Rodentia</taxon>
        <taxon>Myomorpha</taxon>
        <taxon>Muroidea</taxon>
        <taxon>Muridae</taxon>
        <taxon>Murinae</taxon>
        <taxon>Mus</taxon>
        <taxon>Mus</taxon>
    </lineage>
</organism>
<dbReference type="EC" id="1.14.16.5"/>
<dbReference type="EMBL" id="AK039191">
    <property type="protein sequence ID" value="BAC30271.1"/>
    <property type="status" value="ALT_INIT"/>
    <property type="molecule type" value="mRNA"/>
</dbReference>
<dbReference type="EMBL" id="AK040702">
    <property type="protein sequence ID" value="BAC30675.1"/>
    <property type="molecule type" value="mRNA"/>
</dbReference>
<dbReference type="EMBL" id="AK050246">
    <property type="protein sequence ID" value="BAC34143.1"/>
    <property type="status" value="ALT_SEQ"/>
    <property type="molecule type" value="mRNA"/>
</dbReference>
<dbReference type="EMBL" id="AK163155">
    <property type="protein sequence ID" value="BAE37216.1"/>
    <property type="molecule type" value="mRNA"/>
</dbReference>
<dbReference type="CCDS" id="CCDS49052.1">
    <molecule id="Q8BS35-1"/>
</dbReference>
<dbReference type="RefSeq" id="NP_848882.2">
    <molecule id="Q8BS35-1"/>
    <property type="nucleotide sequence ID" value="NM_178767.5"/>
</dbReference>
<dbReference type="BioGRID" id="235430">
    <property type="interactions" value="1"/>
</dbReference>
<dbReference type="FunCoup" id="Q8BS35">
    <property type="interactions" value="375"/>
</dbReference>
<dbReference type="STRING" id="10090.ENSMUSP00000051441"/>
<dbReference type="GlyConnect" id="2117">
    <property type="glycosylation" value="2 N-Linked glycans (1 site)"/>
</dbReference>
<dbReference type="GlyCosmos" id="Q8BS35">
    <property type="glycosylation" value="1 site, 2 glycans"/>
</dbReference>
<dbReference type="GlyGen" id="Q8BS35">
    <property type="glycosylation" value="1 site, 3 N-linked glycans (1 site)"/>
</dbReference>
<dbReference type="iPTMnet" id="Q8BS35"/>
<dbReference type="PhosphoSitePlus" id="Q8BS35"/>
<dbReference type="CPTAC" id="non-CPTAC-3447"/>
<dbReference type="jPOST" id="Q8BS35"/>
<dbReference type="PaxDb" id="10090-ENSMUSP00000051441"/>
<dbReference type="ProteomicsDB" id="296196">
    <molecule id="Q8BS35-1"/>
</dbReference>
<dbReference type="ProteomicsDB" id="296197">
    <molecule id="Q8BS35-2"/>
</dbReference>
<dbReference type="ProteomicsDB" id="296198">
    <molecule id="Q8BS35-3"/>
</dbReference>
<dbReference type="Antibodypedia" id="25207">
    <property type="antibodies" value="55 antibodies from 12 providers"/>
</dbReference>
<dbReference type="DNASU" id="319660"/>
<dbReference type="Ensembl" id="ENSMUST00000049874.14">
    <molecule id="Q8BS35-1"/>
    <property type="protein sequence ID" value="ENSMUSP00000051441.8"/>
    <property type="gene ID" value="ENSMUSG00000050103.19"/>
</dbReference>
<dbReference type="Ensembl" id="ENSMUST00000159998.8">
    <molecule id="Q8BS35-2"/>
    <property type="protein sequence ID" value="ENSMUSP00000123801.2"/>
    <property type="gene ID" value="ENSMUSG00000050103.19"/>
</dbReference>
<dbReference type="Ensembl" id="ENSMUST00000160390.2">
    <molecule id="Q8BS35-3"/>
    <property type="protein sequence ID" value="ENSMUSP00000125639.2"/>
    <property type="gene ID" value="ENSMUSG00000050103.19"/>
</dbReference>
<dbReference type="GeneID" id="319660"/>
<dbReference type="KEGG" id="mmu:319660"/>
<dbReference type="UCSC" id="uc007nkg.1">
    <molecule id="Q8BS35-1"/>
    <property type="organism name" value="mouse"/>
</dbReference>
<dbReference type="AGR" id="MGI:2442495"/>
<dbReference type="CTD" id="392636"/>
<dbReference type="MGI" id="MGI:2442495">
    <property type="gene designation" value="Agmo"/>
</dbReference>
<dbReference type="VEuPathDB" id="HostDB:ENSMUSG00000050103"/>
<dbReference type="eggNOG" id="KOG0872">
    <property type="taxonomic scope" value="Eukaryota"/>
</dbReference>
<dbReference type="GeneTree" id="ENSGT00440000033807"/>
<dbReference type="HOGENOM" id="CLU_033631_2_1_1"/>
<dbReference type="InParanoid" id="Q8BS35"/>
<dbReference type="OMA" id="FMPTGWR"/>
<dbReference type="OrthoDB" id="6354873at2759"/>
<dbReference type="PhylomeDB" id="Q8BS35"/>
<dbReference type="TreeFam" id="TF314881"/>
<dbReference type="Reactome" id="R-MMU-75109">
    <property type="pathway name" value="Triglyceride biosynthesis"/>
</dbReference>
<dbReference type="BioGRID-ORCS" id="319660">
    <property type="hits" value="4 hits in 80 CRISPR screens"/>
</dbReference>
<dbReference type="PRO" id="PR:Q8BS35"/>
<dbReference type="Proteomes" id="UP000000589">
    <property type="component" value="Chromosome 12"/>
</dbReference>
<dbReference type="RNAct" id="Q8BS35">
    <property type="molecule type" value="protein"/>
</dbReference>
<dbReference type="Bgee" id="ENSMUSG00000050103">
    <property type="expression patterns" value="Expressed in urinary bladder urothelium and 146 other cell types or tissues"/>
</dbReference>
<dbReference type="ExpressionAtlas" id="Q8BS35">
    <property type="expression patterns" value="baseline and differential"/>
</dbReference>
<dbReference type="GO" id="GO:0005783">
    <property type="term" value="C:endoplasmic reticulum"/>
    <property type="evidence" value="ECO:0000250"/>
    <property type="project" value="UniProtKB"/>
</dbReference>
<dbReference type="GO" id="GO:0005789">
    <property type="term" value="C:endoplasmic reticulum membrane"/>
    <property type="evidence" value="ECO:0000314"/>
    <property type="project" value="MGI"/>
</dbReference>
<dbReference type="GO" id="GO:0050479">
    <property type="term" value="F:glyceryl-ether monooxygenase activity"/>
    <property type="evidence" value="ECO:0000314"/>
    <property type="project" value="MGI"/>
</dbReference>
<dbReference type="GO" id="GO:0005506">
    <property type="term" value="F:iron ion binding"/>
    <property type="evidence" value="ECO:0000250"/>
    <property type="project" value="UniProtKB"/>
</dbReference>
<dbReference type="GO" id="GO:0046485">
    <property type="term" value="P:ether lipid metabolic process"/>
    <property type="evidence" value="ECO:0000250"/>
    <property type="project" value="UniProtKB"/>
</dbReference>
<dbReference type="GO" id="GO:0006643">
    <property type="term" value="P:membrane lipid metabolic process"/>
    <property type="evidence" value="ECO:0000250"/>
    <property type="project" value="UniProtKB"/>
</dbReference>
<dbReference type="GO" id="GO:0019432">
    <property type="term" value="P:triglyceride biosynthetic process"/>
    <property type="evidence" value="ECO:0000315"/>
    <property type="project" value="MGI"/>
</dbReference>
<dbReference type="InterPro" id="IPR056853">
    <property type="entry name" value="AGMP_C"/>
</dbReference>
<dbReference type="InterPro" id="IPR006694">
    <property type="entry name" value="Fatty_acid_hydroxylase"/>
</dbReference>
<dbReference type="InterPro" id="IPR051689">
    <property type="entry name" value="Sterol_desaturase/TMEM195"/>
</dbReference>
<dbReference type="PANTHER" id="PTHR21624:SF1">
    <property type="entry name" value="ALKYLGLYCEROL MONOOXYGENASE"/>
    <property type="match status" value="1"/>
</dbReference>
<dbReference type="PANTHER" id="PTHR21624">
    <property type="entry name" value="STEROL DESATURASE-RELATED PROTEIN"/>
    <property type="match status" value="1"/>
</dbReference>
<dbReference type="Pfam" id="PF24858">
    <property type="entry name" value="AGMP_C"/>
    <property type="match status" value="1"/>
</dbReference>
<dbReference type="Pfam" id="PF04116">
    <property type="entry name" value="FA_hydroxylase"/>
    <property type="match status" value="1"/>
</dbReference>